<organism>
    <name type="scientific">Mus musculus</name>
    <name type="common">Mouse</name>
    <dbReference type="NCBI Taxonomy" id="10090"/>
    <lineage>
        <taxon>Eukaryota</taxon>
        <taxon>Metazoa</taxon>
        <taxon>Chordata</taxon>
        <taxon>Craniata</taxon>
        <taxon>Vertebrata</taxon>
        <taxon>Euteleostomi</taxon>
        <taxon>Mammalia</taxon>
        <taxon>Eutheria</taxon>
        <taxon>Euarchontoglires</taxon>
        <taxon>Glires</taxon>
        <taxon>Rodentia</taxon>
        <taxon>Myomorpha</taxon>
        <taxon>Muroidea</taxon>
        <taxon>Muridae</taxon>
        <taxon>Murinae</taxon>
        <taxon>Mus</taxon>
        <taxon>Mus</taxon>
    </lineage>
</organism>
<dbReference type="EMBL" id="AK156138">
    <property type="protein sequence ID" value="BAE33602.1"/>
    <property type="status" value="ALT_SEQ"/>
    <property type="molecule type" value="mRNA"/>
</dbReference>
<dbReference type="EMBL" id="AK162620">
    <property type="protein sequence ID" value="BAE36995.1"/>
    <property type="molecule type" value="mRNA"/>
</dbReference>
<dbReference type="EMBL" id="AK172423">
    <property type="protein sequence ID" value="BAE42999.1"/>
    <property type="molecule type" value="mRNA"/>
</dbReference>
<dbReference type="CCDS" id="CCDS36401.2">
    <molecule id="Q3T9M1-1"/>
</dbReference>
<dbReference type="SMR" id="Q3T9M1"/>
<dbReference type="FunCoup" id="Q3T9M1">
    <property type="interactions" value="12"/>
</dbReference>
<dbReference type="STRING" id="10090.ENSMUSP00000045315"/>
<dbReference type="ChEMBL" id="CHEMBL5465310"/>
<dbReference type="GlyGen" id="Q3T9M1">
    <property type="glycosylation" value="2 sites"/>
</dbReference>
<dbReference type="iPTMnet" id="Q3T9M1"/>
<dbReference type="PhosphoSitePlus" id="Q3T9M1"/>
<dbReference type="PaxDb" id="10090-ENSMUSP00000045315"/>
<dbReference type="ProteomicsDB" id="292228">
    <molecule id="Q3T9M1-1"/>
</dbReference>
<dbReference type="ProteomicsDB" id="292229">
    <molecule id="Q3T9M1-2"/>
</dbReference>
<dbReference type="ProteomicsDB" id="292230">
    <molecule id="Q3T9M1-3"/>
</dbReference>
<dbReference type="Antibodypedia" id="47323">
    <property type="antibodies" value="88 antibodies from 21 providers"/>
</dbReference>
<dbReference type="Ensembl" id="ENSMUST00000085790.12">
    <molecule id="Q3T9M1-3"/>
    <property type="protein sequence ID" value="ENSMUSP00000082945.6"/>
    <property type="gene ID" value="ENSMUSG00000037336.15"/>
</dbReference>
<dbReference type="AGR" id="MGI:3583946"/>
<dbReference type="MGI" id="MGI:3583946">
    <property type="gene designation" value="Mfsd2b"/>
</dbReference>
<dbReference type="VEuPathDB" id="HostDB:ENSMUSG00000037336"/>
<dbReference type="eggNOG" id="KOG4830">
    <property type="taxonomic scope" value="Eukaryota"/>
</dbReference>
<dbReference type="GeneTree" id="ENSGT00390000005318"/>
<dbReference type="HOGENOM" id="CLU_027408_6_2_1"/>
<dbReference type="InParanoid" id="Q3T9M1"/>
<dbReference type="PhylomeDB" id="Q3T9M1"/>
<dbReference type="Reactome" id="R-MMU-1660661">
    <property type="pathway name" value="Sphingolipid de novo biosynthesis"/>
</dbReference>
<dbReference type="ChiTaRS" id="Mfsd2b">
    <property type="organism name" value="mouse"/>
</dbReference>
<dbReference type="PRO" id="PR:Q3T9M1"/>
<dbReference type="Proteomes" id="UP000000589">
    <property type="component" value="Chromosome 12"/>
</dbReference>
<dbReference type="RNAct" id="Q3T9M1">
    <property type="molecule type" value="protein"/>
</dbReference>
<dbReference type="Bgee" id="ENSMUSG00000037336">
    <property type="expression patterns" value="Expressed in blood and 83 other cell types or tissues"/>
</dbReference>
<dbReference type="ExpressionAtlas" id="Q3T9M1">
    <property type="expression patterns" value="baseline and differential"/>
</dbReference>
<dbReference type="GO" id="GO:0005886">
    <property type="term" value="C:plasma membrane"/>
    <property type="evidence" value="ECO:0000314"/>
    <property type="project" value="UniProtKB"/>
</dbReference>
<dbReference type="GO" id="GO:0046624">
    <property type="term" value="F:sphingolipid transporter activity"/>
    <property type="evidence" value="ECO:0000314"/>
    <property type="project" value="UniProtKB"/>
</dbReference>
<dbReference type="GO" id="GO:0015293">
    <property type="term" value="F:symporter activity"/>
    <property type="evidence" value="ECO:0007669"/>
    <property type="project" value="InterPro"/>
</dbReference>
<dbReference type="GO" id="GO:0008643">
    <property type="term" value="P:carbohydrate transport"/>
    <property type="evidence" value="ECO:0007669"/>
    <property type="project" value="InterPro"/>
</dbReference>
<dbReference type="GO" id="GO:0006869">
    <property type="term" value="P:lipid transport"/>
    <property type="evidence" value="ECO:0000314"/>
    <property type="project" value="UniProtKB"/>
</dbReference>
<dbReference type="GO" id="GO:1901731">
    <property type="term" value="P:positive regulation of platelet aggregation"/>
    <property type="evidence" value="ECO:0000315"/>
    <property type="project" value="UniProtKB"/>
</dbReference>
<dbReference type="GO" id="GO:0003376">
    <property type="term" value="P:sphingosine-1-phosphate receptor signaling pathway"/>
    <property type="evidence" value="ECO:0000314"/>
    <property type="project" value="UniProtKB"/>
</dbReference>
<dbReference type="FunFam" id="1.20.1250.20:FF:000238">
    <property type="entry name" value="Major facilitator superfamily domain containing 2B"/>
    <property type="match status" value="1"/>
</dbReference>
<dbReference type="FunFam" id="1.20.1250.20:FF:000260">
    <property type="entry name" value="Major facilitator superfamily domain containing 2B"/>
    <property type="match status" value="1"/>
</dbReference>
<dbReference type="Gene3D" id="1.20.1250.20">
    <property type="entry name" value="MFS general substrate transporter like domains"/>
    <property type="match status" value="2"/>
</dbReference>
<dbReference type="InterPro" id="IPR039672">
    <property type="entry name" value="MFS_2"/>
</dbReference>
<dbReference type="InterPro" id="IPR036259">
    <property type="entry name" value="MFS_trans_sf"/>
</dbReference>
<dbReference type="PANTHER" id="PTHR11328">
    <property type="entry name" value="MAJOR FACILITATOR SUPERFAMILY DOMAIN-CONTAINING PROTEIN"/>
    <property type="match status" value="1"/>
</dbReference>
<dbReference type="PANTHER" id="PTHR11328:SF30">
    <property type="entry name" value="SPHINGOSINE-1-PHOSPHATE TRANSPORTER MFSD2B"/>
    <property type="match status" value="1"/>
</dbReference>
<dbReference type="Pfam" id="PF13347">
    <property type="entry name" value="MFS_2"/>
    <property type="match status" value="1"/>
</dbReference>
<dbReference type="SUPFAM" id="SSF103473">
    <property type="entry name" value="MFS general substrate transporter"/>
    <property type="match status" value="1"/>
</dbReference>
<evidence type="ECO:0000255" key="1"/>
<evidence type="ECO:0000256" key="2">
    <source>
        <dbReference type="SAM" id="MobiDB-lite"/>
    </source>
</evidence>
<evidence type="ECO:0000269" key="3">
    <source>
    </source>
</evidence>
<evidence type="ECO:0000269" key="4">
    <source>
    </source>
</evidence>
<evidence type="ECO:0000269" key="5">
    <source>
    </source>
</evidence>
<evidence type="ECO:0000269" key="6">
    <source>
    </source>
</evidence>
<evidence type="ECO:0000269" key="7">
    <source>
    </source>
</evidence>
<evidence type="ECO:0000269" key="8">
    <source>
    </source>
</evidence>
<evidence type="ECO:0000303" key="9">
    <source>
    </source>
</evidence>
<evidence type="ECO:0000303" key="10">
    <source>
    </source>
</evidence>
<evidence type="ECO:0000305" key="11"/>
<evidence type="ECO:0000305" key="12">
    <source>
    </source>
</evidence>
<evidence type="ECO:0000312" key="13">
    <source>
        <dbReference type="MGI" id="MGI:3583946"/>
    </source>
</evidence>
<keyword id="KW-0025">Alternative splicing</keyword>
<keyword id="KW-1003">Cell membrane</keyword>
<keyword id="KW-0445">Lipid transport</keyword>
<keyword id="KW-0472">Membrane</keyword>
<keyword id="KW-1185">Reference proteome</keyword>
<keyword id="KW-0812">Transmembrane</keyword>
<keyword id="KW-1133">Transmembrane helix</keyword>
<keyword id="KW-0813">Transport</keyword>
<feature type="chain" id="PRO_0000341261" description="Sphingosine-1-phosphate transporter MFSD2B">
    <location>
        <begin position="1"/>
        <end position="494"/>
    </location>
</feature>
<feature type="transmembrane region" description="Helical" evidence="1">
    <location>
        <begin position="103"/>
        <end position="123"/>
    </location>
</feature>
<feature type="transmembrane region" description="Helical" evidence="1">
    <location>
        <begin position="140"/>
        <end position="160"/>
    </location>
</feature>
<feature type="transmembrane region" description="Helical" evidence="1">
    <location>
        <begin position="179"/>
        <end position="199"/>
    </location>
</feature>
<feature type="transmembrane region" description="Helical" evidence="1">
    <location>
        <begin position="223"/>
        <end position="243"/>
    </location>
</feature>
<feature type="transmembrane region" description="Helical" evidence="1">
    <location>
        <begin position="277"/>
        <end position="297"/>
    </location>
</feature>
<feature type="transmembrane region" description="Helical" evidence="1">
    <location>
        <begin position="310"/>
        <end position="330"/>
    </location>
</feature>
<feature type="transmembrane region" description="Helical" evidence="1">
    <location>
        <begin position="339"/>
        <end position="359"/>
    </location>
</feature>
<feature type="transmembrane region" description="Helical" evidence="1">
    <location>
        <begin position="360"/>
        <end position="380"/>
    </location>
</feature>
<feature type="transmembrane region" description="Helical" evidence="1">
    <location>
        <begin position="402"/>
        <end position="422"/>
    </location>
</feature>
<feature type="transmembrane region" description="Helical" evidence="1">
    <location>
        <begin position="449"/>
        <end position="469"/>
    </location>
</feature>
<feature type="region of interest" description="Disordered" evidence="2">
    <location>
        <begin position="1"/>
        <end position="26"/>
    </location>
</feature>
<feature type="region of interest" description="Disordered" evidence="2">
    <location>
        <begin position="473"/>
        <end position="494"/>
    </location>
</feature>
<feature type="compositionally biased region" description="Pro residues" evidence="2">
    <location>
        <begin position="1"/>
        <end position="12"/>
    </location>
</feature>
<feature type="compositionally biased region" description="Basic residues" evidence="2">
    <location>
        <begin position="485"/>
        <end position="494"/>
    </location>
</feature>
<feature type="splice variant" id="VSP_034235" description="In isoform 2." evidence="9">
    <location>
        <begin position="1"/>
        <end position="103"/>
    </location>
</feature>
<feature type="splice variant" id="VSP_034236" description="In isoform 3." evidence="9">
    <original>MVP</original>
    <variation>CRV</variation>
    <location>
        <begin position="345"/>
        <end position="347"/>
    </location>
</feature>
<feature type="splice variant" id="VSP_034237" description="In isoform 3." evidence="9">
    <location>
        <begin position="348"/>
        <end position="494"/>
    </location>
</feature>
<feature type="mutagenesis site" description="Decreased sphingosine-1-phosphate transport." evidence="5 6">
    <original>D</original>
    <variation>A</variation>
    <location>
        <position position="85"/>
    </location>
</feature>
<feature type="mutagenesis site" description="Decreased export of sphingosine-1-phosphate." evidence="6">
    <original>T</original>
    <variation>A</variation>
    <location>
        <position position="147"/>
    </location>
</feature>
<feature type="mutagenesis site" description="Decreased sphingosine-1-phosphate transport." evidence="5">
    <original>K</original>
    <variation>A</variation>
    <location>
        <position position="413"/>
    </location>
</feature>
<feature type="sequence conflict" description="In Ref. 1; BAE33602." evidence="11" ref="1">
    <original>C</original>
    <variation>Y</variation>
    <location>
        <position position="432"/>
    </location>
</feature>
<sequence length="494" mass="52797">MSVPHGPTPAPVAEPHTQEPGSDKRDGRLSVCTKVCYGIGGVPNQVASSASAFYLQLFLLDVAQIPAAQVSLALFGGKVSGAVADPVAGFFINKSRRTGSGRLMPWALGCMPLIALAYFFLWFLPPFTSLRGLWYTSFYCLFQALATFFQVPYTALTMILTPSPRERDSATAYRMTMEMAGTLMGATVHGLIVSSAHGSQRCEDTVHPRSPAVSPDVARLYCIAAAVVALTYPVCGSLLCLGVKEQPDTSAPASGQGLNFFTGLAITSQHPPYLSLVVSFLFISAAVQVEQSYLVLFCTHASKLQDHVQNLVLIILVSAVLSTPLWEWVLQRFGKKTSAFGICVMVPFSILLAAVPSAPVAYVVAFVSGVSIAVSLLLPWSMLPDVVDDFQLQHRCGPGVETIFYSSYVFFTKLSGAGALGISTLSLEFAGCEAGACQQAEEVVVTLKVLIGAVPTCMILIGLCILLVGPTPKMPRQDTSSQLSLRRRTSYSLA</sequence>
<reference key="1">
    <citation type="journal article" date="2005" name="Science">
        <title>The transcriptional landscape of the mammalian genome.</title>
        <authorList>
            <person name="Carninci P."/>
            <person name="Kasukawa T."/>
            <person name="Katayama S."/>
            <person name="Gough J."/>
            <person name="Frith M.C."/>
            <person name="Maeda N."/>
            <person name="Oyama R."/>
            <person name="Ravasi T."/>
            <person name="Lenhard B."/>
            <person name="Wells C."/>
            <person name="Kodzius R."/>
            <person name="Shimokawa K."/>
            <person name="Bajic V.B."/>
            <person name="Brenner S.E."/>
            <person name="Batalov S."/>
            <person name="Forrest A.R."/>
            <person name="Zavolan M."/>
            <person name="Davis M.J."/>
            <person name="Wilming L.G."/>
            <person name="Aidinis V."/>
            <person name="Allen J.E."/>
            <person name="Ambesi-Impiombato A."/>
            <person name="Apweiler R."/>
            <person name="Aturaliya R.N."/>
            <person name="Bailey T.L."/>
            <person name="Bansal M."/>
            <person name="Baxter L."/>
            <person name="Beisel K.W."/>
            <person name="Bersano T."/>
            <person name="Bono H."/>
            <person name="Chalk A.M."/>
            <person name="Chiu K.P."/>
            <person name="Choudhary V."/>
            <person name="Christoffels A."/>
            <person name="Clutterbuck D.R."/>
            <person name="Crowe M.L."/>
            <person name="Dalla E."/>
            <person name="Dalrymple B.P."/>
            <person name="de Bono B."/>
            <person name="Della Gatta G."/>
            <person name="di Bernardo D."/>
            <person name="Down T."/>
            <person name="Engstrom P."/>
            <person name="Fagiolini M."/>
            <person name="Faulkner G."/>
            <person name="Fletcher C.F."/>
            <person name="Fukushima T."/>
            <person name="Furuno M."/>
            <person name="Futaki S."/>
            <person name="Gariboldi M."/>
            <person name="Georgii-Hemming P."/>
            <person name="Gingeras T.R."/>
            <person name="Gojobori T."/>
            <person name="Green R.E."/>
            <person name="Gustincich S."/>
            <person name="Harbers M."/>
            <person name="Hayashi Y."/>
            <person name="Hensch T.K."/>
            <person name="Hirokawa N."/>
            <person name="Hill D."/>
            <person name="Huminiecki L."/>
            <person name="Iacono M."/>
            <person name="Ikeo K."/>
            <person name="Iwama A."/>
            <person name="Ishikawa T."/>
            <person name="Jakt M."/>
            <person name="Kanapin A."/>
            <person name="Katoh M."/>
            <person name="Kawasawa Y."/>
            <person name="Kelso J."/>
            <person name="Kitamura H."/>
            <person name="Kitano H."/>
            <person name="Kollias G."/>
            <person name="Krishnan S.P."/>
            <person name="Kruger A."/>
            <person name="Kummerfeld S.K."/>
            <person name="Kurochkin I.V."/>
            <person name="Lareau L.F."/>
            <person name="Lazarevic D."/>
            <person name="Lipovich L."/>
            <person name="Liu J."/>
            <person name="Liuni S."/>
            <person name="McWilliam S."/>
            <person name="Madan Babu M."/>
            <person name="Madera M."/>
            <person name="Marchionni L."/>
            <person name="Matsuda H."/>
            <person name="Matsuzawa S."/>
            <person name="Miki H."/>
            <person name="Mignone F."/>
            <person name="Miyake S."/>
            <person name="Morris K."/>
            <person name="Mottagui-Tabar S."/>
            <person name="Mulder N."/>
            <person name="Nakano N."/>
            <person name="Nakauchi H."/>
            <person name="Ng P."/>
            <person name="Nilsson R."/>
            <person name="Nishiguchi S."/>
            <person name="Nishikawa S."/>
            <person name="Nori F."/>
            <person name="Ohara O."/>
            <person name="Okazaki Y."/>
            <person name="Orlando V."/>
            <person name="Pang K.C."/>
            <person name="Pavan W.J."/>
            <person name="Pavesi G."/>
            <person name="Pesole G."/>
            <person name="Petrovsky N."/>
            <person name="Piazza S."/>
            <person name="Reed J."/>
            <person name="Reid J.F."/>
            <person name="Ring B.Z."/>
            <person name="Ringwald M."/>
            <person name="Rost B."/>
            <person name="Ruan Y."/>
            <person name="Salzberg S.L."/>
            <person name="Sandelin A."/>
            <person name="Schneider C."/>
            <person name="Schoenbach C."/>
            <person name="Sekiguchi K."/>
            <person name="Semple C.A."/>
            <person name="Seno S."/>
            <person name="Sessa L."/>
            <person name="Sheng Y."/>
            <person name="Shibata Y."/>
            <person name="Shimada H."/>
            <person name="Shimada K."/>
            <person name="Silva D."/>
            <person name="Sinclair B."/>
            <person name="Sperling S."/>
            <person name="Stupka E."/>
            <person name="Sugiura K."/>
            <person name="Sultana R."/>
            <person name="Takenaka Y."/>
            <person name="Taki K."/>
            <person name="Tammoja K."/>
            <person name="Tan S.L."/>
            <person name="Tang S."/>
            <person name="Taylor M.S."/>
            <person name="Tegner J."/>
            <person name="Teichmann S.A."/>
            <person name="Ueda H.R."/>
            <person name="van Nimwegen E."/>
            <person name="Verardo R."/>
            <person name="Wei C.L."/>
            <person name="Yagi K."/>
            <person name="Yamanishi H."/>
            <person name="Zabarovsky E."/>
            <person name="Zhu S."/>
            <person name="Zimmer A."/>
            <person name="Hide W."/>
            <person name="Bult C."/>
            <person name="Grimmond S.M."/>
            <person name="Teasdale R.D."/>
            <person name="Liu E.T."/>
            <person name="Brusic V."/>
            <person name="Quackenbush J."/>
            <person name="Wahlestedt C."/>
            <person name="Mattick J.S."/>
            <person name="Hume D.A."/>
            <person name="Kai C."/>
            <person name="Sasaki D."/>
            <person name="Tomaru Y."/>
            <person name="Fukuda S."/>
            <person name="Kanamori-Katayama M."/>
            <person name="Suzuki M."/>
            <person name="Aoki J."/>
            <person name="Arakawa T."/>
            <person name="Iida J."/>
            <person name="Imamura K."/>
            <person name="Itoh M."/>
            <person name="Kato T."/>
            <person name="Kawaji H."/>
            <person name="Kawagashira N."/>
            <person name="Kawashima T."/>
            <person name="Kojima M."/>
            <person name="Kondo S."/>
            <person name="Konno H."/>
            <person name="Nakano K."/>
            <person name="Ninomiya N."/>
            <person name="Nishio T."/>
            <person name="Okada M."/>
            <person name="Plessy C."/>
            <person name="Shibata K."/>
            <person name="Shiraki T."/>
            <person name="Suzuki S."/>
            <person name="Tagami M."/>
            <person name="Waki K."/>
            <person name="Watahiki A."/>
            <person name="Okamura-Oho Y."/>
            <person name="Suzuki H."/>
            <person name="Kawai J."/>
            <person name="Hayashizaki Y."/>
        </authorList>
    </citation>
    <scope>NUCLEOTIDE SEQUENCE [LARGE SCALE MRNA] (ISOFORMS 1; 2 AND 3)</scope>
    <source>
        <strain>C57BL/6J</strain>
        <strain>NOD</strain>
        <tissue>Bone</tissue>
        <tissue>Spleen</tissue>
    </source>
</reference>
<reference key="2">
    <citation type="journal article" date="2008" name="Biochem. J.">
        <title>Mfsd2a encodes a novel major facilitator superfamily domain-containing protein highly induced in brown adipose tissue during fasting and adaptive thermogenesis.</title>
        <authorList>
            <person name="Angers M."/>
            <person name="Uldry M."/>
            <person name="Kong D."/>
            <person name="Gimble J.M."/>
            <person name="Jetten A.M."/>
        </authorList>
    </citation>
    <scope>TISSUE SPECIFICITY</scope>
</reference>
<reference key="3">
    <citation type="journal article" date="2017" name="Nature">
        <title>Mfsd2b is essential for the sphingosine-1-phosphate export in erythrocytes and platelets.</title>
        <authorList>
            <person name="Vu T.M."/>
            <person name="Ishizu A.N."/>
            <person name="Foo J.C."/>
            <person name="Toh X.R."/>
            <person name="Zhang F."/>
            <person name="Whee D.M."/>
            <person name="Torta F."/>
            <person name="Cazenave-Gassiot A."/>
            <person name="Matsumura T."/>
            <person name="Kim S."/>
            <person name="Toh S.E.S."/>
            <person name="Suda T."/>
            <person name="Silver D.L."/>
            <person name="Wenk M.R."/>
            <person name="Nguyen L.N."/>
        </authorList>
    </citation>
    <scope>FUNCTION</scope>
    <scope>SUBCELLULAR LOCATION</scope>
    <scope>TISSUE SPECIFICITY</scope>
    <scope>DISRUPTION PHENOTYPE</scope>
</reference>
<reference key="4">
    <citation type="journal article" date="2018" name="Sci. Rep.">
        <title>MFSD2B is a sphingosine 1-phosphate transporter in erythroid cells.</title>
        <authorList>
            <person name="Kobayashi N."/>
            <person name="Kawasaki-Nishi S."/>
            <person name="Otsuka M."/>
            <person name="Hisano Y."/>
            <person name="Yamaguchi A."/>
            <person name="Nishi T."/>
        </authorList>
    </citation>
    <scope>FUNCTION</scope>
    <scope>CATALYTIC ACTIVITY</scope>
    <scope>SUBCELLULAR LOCATION</scope>
    <scope>TISSUE SPECIFICITY</scope>
    <scope>MUTAGENESIS OF ASP-85 AND LYS-413</scope>
</reference>
<reference key="5">
    <citation type="journal article" date="2021" name="J. Biol. Chem.">
        <title>Erythrocytes efficiently utilize exogenous sphingosines for S1P synthesis and export via Mfsd2b.</title>
        <authorList>
            <person name="Nguyen T.Q."/>
            <person name="Vu T.M."/>
            <person name="Tukijan F."/>
            <person name="Muralidharan S."/>
            <person name="Foo J.C."/>
            <person name="Li Chin J.F."/>
            <person name="Hasan Z."/>
            <person name="Torta F."/>
            <person name="Nguyen L.N."/>
        </authorList>
    </citation>
    <scope>FUNCTION</scope>
    <scope>CATALYTIC ACTIVITY</scope>
    <scope>MUTAGENESIS OF ASP-85 AND THR-147</scope>
</reference>
<reference key="6">
    <citation type="journal article" date="2021" name="J. Biol. Chem.">
        <title>Direct uptake of sphingosine-1-phosphate independent of phospholipid phosphatases.</title>
        <authorList>
            <person name="Goto H."/>
            <person name="Miyamoto M."/>
            <person name="Kihara A."/>
        </authorList>
    </citation>
    <scope>FUNCTION</scope>
</reference>
<reference key="7">
    <citation type="journal article" date="2021" name="Nat. Commun.">
        <title>Deletion of Mfsd2b impairs thrombotic functions of platelets.</title>
        <authorList>
            <person name="Chandrakanthan M."/>
            <person name="Nguyen T.Q."/>
            <person name="Hasan Z."/>
            <person name="Muralidharan S."/>
            <person name="Vu T.M."/>
            <person name="Li A.W.L."/>
            <person name="Le U.T.N."/>
            <person name="Thi Thuy Ha H."/>
            <person name="Baik S.H."/>
            <person name="Tan S.H."/>
            <person name="Foo J.C."/>
            <person name="Wenk M.R."/>
            <person name="Cazenave-Gassiot A."/>
            <person name="Torta F."/>
            <person name="Ong W.Y."/>
            <person name="Chan M.Y.Y."/>
            <person name="Nguyen L.N."/>
        </authorList>
    </citation>
    <scope>FUNCTION</scope>
    <scope>CATALYTIC ACTIVITY</scope>
    <scope>SUBCELLULAR LOCATION</scope>
    <scope>DISRUPTION PHENOTYPE</scope>
</reference>
<gene>
    <name evidence="10 13" type="primary">Mfsd2b</name>
    <name evidence="13" type="synonym">Gm1964</name>
</gene>
<comment type="function">
    <text evidence="4 5 6 7 8">Lipid transporter that specifically mediates export of sphingosine-1-phosphate in red blood cells and platelets (PubMed:29045386, PubMed:29563527, PubMed:33334894, PubMed:33863882). Sphingosine-1-phosphate is a signaling sphingolipid and its export from red blood cells into in the plasma is required for red blood cell morphology (PubMed:29045386). Sphingosine-1-phosphate export from platelets is required for platelet aggregation and thrombus formation (PubMed:33863882). Mediates the export of different sphingosine-1-phosphate (S1P) species, including S1P(d18:0) (sphinganine 1-phosphate), S1P (d18:1) (sphing-4-enine 1-phosphate) and S1P (d18:2) (sphinga-4E,14Z-dienine-1-phosphate) (PubMed:33863882). Release of sphingosine-1-phosphate is facilitated by a proton gradient (PubMed:33334894). In contrast, cations, such as sodium, are not required to drive sphingosine-1-phosphate transport (PubMed:29563527, PubMed:33334894). In addition to export, also able to mediate S1P import (PubMed:33785361). Does not transport lysophosphatidylcholine (LPC) (PubMed:29045386).</text>
</comment>
<comment type="catalytic activity">
    <reaction evidence="6 8 12">
        <text>sphing-4-enine 1-phosphate(in) = sphing-4-enine 1-phosphate(out)</text>
        <dbReference type="Rhea" id="RHEA:38667"/>
        <dbReference type="ChEBI" id="CHEBI:60119"/>
    </reaction>
</comment>
<comment type="catalytic activity">
    <reaction evidence="8">
        <text>sphinganine 1-phosphate(in) = sphinganine 1-phosphate(out)</text>
        <dbReference type="Rhea" id="RHEA:38671"/>
        <dbReference type="ChEBI" id="CHEBI:57939"/>
    </reaction>
</comment>
<comment type="catalytic activity">
    <reaction evidence="8">
        <text>sphinga-4E,14Z-dienine-1-phosphate(in) = sphinga-4E,14Z-dienine-1-phosphate(out)</text>
        <dbReference type="Rhea" id="RHEA:70207"/>
        <dbReference type="ChEBI" id="CHEBI:149632"/>
    </reaction>
</comment>
<comment type="subcellular location">
    <subcellularLocation>
        <location evidence="4 5 8">Cell membrane</location>
        <topology evidence="1">Multi-pass membrane protein</topology>
    </subcellularLocation>
    <text evidence="4">Localizes to the cell membrane and intracellular membranes.</text>
</comment>
<comment type="alternative products">
    <event type="alternative splicing"/>
    <isoform>
        <id>Q3T9M1-1</id>
        <name>1</name>
        <sequence type="displayed"/>
    </isoform>
    <isoform>
        <id>Q3T9M1-2</id>
        <name>2</name>
        <sequence type="described" ref="VSP_034235"/>
    </isoform>
    <isoform>
        <id>Q3T9M1-3</id>
        <name>3</name>
        <sequence type="described" ref="VSP_034236 VSP_034237"/>
    </isoform>
</comment>
<comment type="tissue specificity">
    <text evidence="3 4 5">Widely expressed with highest expression in spleen, lung and testis (PubMed:18694395). Predominantly expressed in erythroid lineages giving rise to erythrocytes and platelets, but absent in lymphoid lineages (PubMed:29045386, PubMed:29563527).</text>
</comment>
<comment type="disruption phenotype">
    <text evidence="4 8">Mice were born with normal gross appearance and thrived (PubMed:29045386). An accumulation of sphingosine-1-phosphate in red blood cells is observed, while sphingosine-1-phosphate level in plasma is significantly reduced (PubMed:29045386). Mice display hemolysis associated with red blood cell stomatocytes, and the hemolytic phenotype is severely increased with signs of membrane fragility under stress erythropoiesis (PubMed:29045386). Mice significantly reduced thrombus formation (PubMed:33863882).</text>
</comment>
<comment type="similarity">
    <text evidence="11">Belongs to the major facilitator superfamily.</text>
</comment>
<comment type="sequence caution" evidence="11">
    <conflict type="erroneous termination">
        <sequence resource="EMBL-CDS" id="BAE33602"/>
    </conflict>
    <text>Extended C-terminus.</text>
</comment>
<accession>Q3T9M1</accession>
<accession>Q3TRN2</accession>
<accession>Q3U198</accession>
<name>MFS2B_MOUSE</name>
<protein>
    <recommendedName>
        <fullName evidence="11">Sphingosine-1-phosphate transporter MFSD2B</fullName>
    </recommendedName>
    <alternativeName>
        <fullName evidence="11">Major facilitator superfamily domain-containing protein 2B</fullName>
        <shortName evidence="10">mMfsd2b</shortName>
    </alternativeName>
</protein>
<proteinExistence type="evidence at protein level"/>